<evidence type="ECO:0000255" key="1">
    <source>
        <dbReference type="HAMAP-Rule" id="MF_00530"/>
    </source>
</evidence>
<dbReference type="EMBL" id="AE008917">
    <property type="protein sequence ID" value="AAL51434.1"/>
    <property type="molecule type" value="Genomic_DNA"/>
</dbReference>
<dbReference type="PIR" id="AG3283">
    <property type="entry name" value="AG3283"/>
</dbReference>
<dbReference type="RefSeq" id="WP_002964875.1">
    <property type="nucleotide sequence ID" value="NZ_GG703781.1"/>
</dbReference>
<dbReference type="SMR" id="P63660"/>
<dbReference type="KEGG" id="bme:BMEI0252"/>
<dbReference type="KEGG" id="bmel:DK63_1180"/>
<dbReference type="PATRIC" id="fig|224914.52.peg.1247"/>
<dbReference type="eggNOG" id="COG0355">
    <property type="taxonomic scope" value="Bacteria"/>
</dbReference>
<dbReference type="Proteomes" id="UP000000419">
    <property type="component" value="Chromosome I"/>
</dbReference>
<dbReference type="GO" id="GO:0005886">
    <property type="term" value="C:plasma membrane"/>
    <property type="evidence" value="ECO:0007669"/>
    <property type="project" value="UniProtKB-SubCell"/>
</dbReference>
<dbReference type="GO" id="GO:0045259">
    <property type="term" value="C:proton-transporting ATP synthase complex"/>
    <property type="evidence" value="ECO:0007669"/>
    <property type="project" value="UniProtKB-KW"/>
</dbReference>
<dbReference type="GO" id="GO:0005524">
    <property type="term" value="F:ATP binding"/>
    <property type="evidence" value="ECO:0007669"/>
    <property type="project" value="UniProtKB-UniRule"/>
</dbReference>
<dbReference type="GO" id="GO:0046933">
    <property type="term" value="F:proton-transporting ATP synthase activity, rotational mechanism"/>
    <property type="evidence" value="ECO:0007669"/>
    <property type="project" value="UniProtKB-UniRule"/>
</dbReference>
<dbReference type="CDD" id="cd12152">
    <property type="entry name" value="F1-ATPase_delta"/>
    <property type="match status" value="1"/>
</dbReference>
<dbReference type="Gene3D" id="2.60.15.10">
    <property type="entry name" value="F0F1 ATP synthase delta/epsilon subunit, N-terminal"/>
    <property type="match status" value="1"/>
</dbReference>
<dbReference type="HAMAP" id="MF_00530">
    <property type="entry name" value="ATP_synth_epsil_bac"/>
    <property type="match status" value="1"/>
</dbReference>
<dbReference type="InterPro" id="IPR001469">
    <property type="entry name" value="ATP_synth_F1_dsu/esu"/>
</dbReference>
<dbReference type="InterPro" id="IPR020546">
    <property type="entry name" value="ATP_synth_F1_dsu/esu_N"/>
</dbReference>
<dbReference type="InterPro" id="IPR036771">
    <property type="entry name" value="ATPsynth_dsu/esu_N"/>
</dbReference>
<dbReference type="NCBIfam" id="TIGR01216">
    <property type="entry name" value="ATP_synt_epsi"/>
    <property type="match status" value="1"/>
</dbReference>
<dbReference type="NCBIfam" id="NF001851">
    <property type="entry name" value="PRK00571.2-4"/>
    <property type="match status" value="1"/>
</dbReference>
<dbReference type="PANTHER" id="PTHR13822">
    <property type="entry name" value="ATP SYNTHASE DELTA/EPSILON CHAIN"/>
    <property type="match status" value="1"/>
</dbReference>
<dbReference type="PANTHER" id="PTHR13822:SF10">
    <property type="entry name" value="ATP SYNTHASE EPSILON CHAIN, CHLOROPLASTIC"/>
    <property type="match status" value="1"/>
</dbReference>
<dbReference type="Pfam" id="PF02823">
    <property type="entry name" value="ATP-synt_DE_N"/>
    <property type="match status" value="1"/>
</dbReference>
<dbReference type="SUPFAM" id="SSF51344">
    <property type="entry name" value="Epsilon subunit of F1F0-ATP synthase N-terminal domain"/>
    <property type="match status" value="1"/>
</dbReference>
<protein>
    <recommendedName>
        <fullName evidence="1">ATP synthase epsilon chain</fullName>
    </recommendedName>
    <alternativeName>
        <fullName evidence="1">ATP synthase F1 sector epsilon subunit</fullName>
    </alternativeName>
    <alternativeName>
        <fullName evidence="1">F-ATPase epsilon subunit</fullName>
    </alternativeName>
</protein>
<accession>P63660</accession>
<accession>Q8YJ34</accession>
<comment type="function">
    <text evidence="1">Produces ATP from ADP in the presence of a proton gradient across the membrane.</text>
</comment>
<comment type="subunit">
    <text>F-type ATPases have 2 components, CF(1) - the catalytic core - and CF(0) - the membrane proton channel. CF(1) has five subunits: alpha(3), beta(3), gamma(1), delta(1), epsilon(1). CF(0) has three main subunits: a, b and c.</text>
</comment>
<comment type="subcellular location">
    <subcellularLocation>
        <location evidence="1">Cell inner membrane</location>
        <topology evidence="1">Peripheral membrane protein</topology>
    </subcellularLocation>
</comment>
<comment type="similarity">
    <text evidence="1">Belongs to the ATPase epsilon chain family.</text>
</comment>
<proteinExistence type="inferred from homology"/>
<organism>
    <name type="scientific">Brucella melitensis biotype 1 (strain ATCC 23456 / CCUG 17765 / NCTC 10094 / 16M)</name>
    <dbReference type="NCBI Taxonomy" id="224914"/>
    <lineage>
        <taxon>Bacteria</taxon>
        <taxon>Pseudomonadati</taxon>
        <taxon>Pseudomonadota</taxon>
        <taxon>Alphaproteobacteria</taxon>
        <taxon>Hyphomicrobiales</taxon>
        <taxon>Brucellaceae</taxon>
        <taxon>Brucella/Ochrobactrum group</taxon>
        <taxon>Brucella</taxon>
    </lineage>
</organism>
<gene>
    <name evidence="1" type="primary">atpC</name>
    <name type="ordered locus">BMEI0252</name>
</gene>
<reference key="1">
    <citation type="journal article" date="2002" name="Proc. Natl. Acad. Sci. U.S.A.">
        <title>The genome sequence of the facultative intracellular pathogen Brucella melitensis.</title>
        <authorList>
            <person name="DelVecchio V.G."/>
            <person name="Kapatral V."/>
            <person name="Redkar R.J."/>
            <person name="Patra G."/>
            <person name="Mujer C."/>
            <person name="Los T."/>
            <person name="Ivanova N."/>
            <person name="Anderson I."/>
            <person name="Bhattacharyya A."/>
            <person name="Lykidis A."/>
            <person name="Reznik G."/>
            <person name="Jablonski L."/>
            <person name="Larsen N."/>
            <person name="D'Souza M."/>
            <person name="Bernal A."/>
            <person name="Mazur M."/>
            <person name="Goltsman E."/>
            <person name="Selkov E."/>
            <person name="Elzer P.H."/>
            <person name="Hagius S."/>
            <person name="O'Callaghan D."/>
            <person name="Letesson J.-J."/>
            <person name="Haselkorn R."/>
            <person name="Kyrpides N.C."/>
            <person name="Overbeek R."/>
        </authorList>
    </citation>
    <scope>NUCLEOTIDE SEQUENCE [LARGE SCALE GENOMIC DNA]</scope>
    <source>
        <strain>ATCC 23456 / CCUG 17765 / NCTC 10094 / 16M</strain>
    </source>
</reference>
<keyword id="KW-0066">ATP synthesis</keyword>
<keyword id="KW-0997">Cell inner membrane</keyword>
<keyword id="KW-1003">Cell membrane</keyword>
<keyword id="KW-0139">CF(1)</keyword>
<keyword id="KW-0375">Hydrogen ion transport</keyword>
<keyword id="KW-0406">Ion transport</keyword>
<keyword id="KW-0472">Membrane</keyword>
<keyword id="KW-0813">Transport</keyword>
<feature type="chain" id="PRO_0000188109" description="ATP synthase epsilon chain">
    <location>
        <begin position="1"/>
        <end position="135"/>
    </location>
</feature>
<name>ATPE_BRUME</name>
<sequence length="135" mass="14482">MAQAFQFELVSPERLLLSAQVTEVVIPGSEGYLTALAGHSPLMTTIMPGVVSVKLADGKTDSYVVFGGFADITPQGCTVLAESATHVDDIDPADIQHRIDHARKVLEDASSNEHRTKAEIFLHQLMTLQGAILPA</sequence>